<keyword id="KW-0119">Carbohydrate metabolism</keyword>
<keyword id="KW-0325">Glycoprotein</keyword>
<keyword id="KW-0326">Glycosidase</keyword>
<keyword id="KW-0378">Hydrolase</keyword>
<keyword id="KW-0624">Polysaccharide degradation</keyword>
<keyword id="KW-1185">Reference proteome</keyword>
<keyword id="KW-0964">Secreted</keyword>
<keyword id="KW-0732">Signal</keyword>
<keyword id="KW-0858">Xylan degradation</keyword>
<dbReference type="EC" id="3.2.1.55"/>
<dbReference type="EMBL" id="CH476609">
    <property type="protein sequence ID" value="EAU29520.1"/>
    <property type="molecule type" value="Genomic_DNA"/>
</dbReference>
<dbReference type="RefSeq" id="XP_001209373.1">
    <property type="nucleotide sequence ID" value="XM_001209373.1"/>
</dbReference>
<dbReference type="SMR" id="Q0C8B3"/>
<dbReference type="STRING" id="341663.Q0C8B3"/>
<dbReference type="GlyCosmos" id="Q0C8B3">
    <property type="glycosylation" value="1 site, No reported glycans"/>
</dbReference>
<dbReference type="EnsemblFungi" id="EAU29520">
    <property type="protein sequence ID" value="EAU29520"/>
    <property type="gene ID" value="ATEG_10071"/>
</dbReference>
<dbReference type="GeneID" id="4319554"/>
<dbReference type="VEuPathDB" id="FungiDB:ATEG_10071"/>
<dbReference type="eggNOG" id="ENOG502QUZT">
    <property type="taxonomic scope" value="Eukaryota"/>
</dbReference>
<dbReference type="HOGENOM" id="CLU_041805_0_0_1"/>
<dbReference type="OMA" id="QYDDWGG"/>
<dbReference type="OrthoDB" id="3156236at2759"/>
<dbReference type="Proteomes" id="UP000007963">
    <property type="component" value="Unassembled WGS sequence"/>
</dbReference>
<dbReference type="GO" id="GO:0005576">
    <property type="term" value="C:extracellular region"/>
    <property type="evidence" value="ECO:0007669"/>
    <property type="project" value="UniProtKB-SubCell"/>
</dbReference>
<dbReference type="GO" id="GO:0046556">
    <property type="term" value="F:alpha-L-arabinofuranosidase activity"/>
    <property type="evidence" value="ECO:0007669"/>
    <property type="project" value="UniProtKB-EC"/>
</dbReference>
<dbReference type="GO" id="GO:0046373">
    <property type="term" value="P:L-arabinose metabolic process"/>
    <property type="evidence" value="ECO:0007669"/>
    <property type="project" value="InterPro"/>
</dbReference>
<dbReference type="GO" id="GO:0045493">
    <property type="term" value="P:xylan catabolic process"/>
    <property type="evidence" value="ECO:0007669"/>
    <property type="project" value="UniProtKB-KW"/>
</dbReference>
<dbReference type="CDD" id="cd08987">
    <property type="entry name" value="GH62"/>
    <property type="match status" value="1"/>
</dbReference>
<dbReference type="Gene3D" id="2.115.10.20">
    <property type="entry name" value="Glycosyl hydrolase domain, family 43"/>
    <property type="match status" value="1"/>
</dbReference>
<dbReference type="InterPro" id="IPR005193">
    <property type="entry name" value="GH62_arabinosidase"/>
</dbReference>
<dbReference type="InterPro" id="IPR023296">
    <property type="entry name" value="Glyco_hydro_beta-prop_sf"/>
</dbReference>
<dbReference type="PANTHER" id="PTHR40631">
    <property type="entry name" value="ALPHA-L-ARABINOFURANOSIDASE AXHA-2-RELATED"/>
    <property type="match status" value="1"/>
</dbReference>
<dbReference type="PANTHER" id="PTHR40631:SF1">
    <property type="entry name" value="ALPHA-L-ARABINOFURANOSIDASE AXHA-2-RELATED"/>
    <property type="match status" value="1"/>
</dbReference>
<dbReference type="Pfam" id="PF03664">
    <property type="entry name" value="Glyco_hydro_62"/>
    <property type="match status" value="1"/>
</dbReference>
<dbReference type="SUPFAM" id="SSF75005">
    <property type="entry name" value="Arabinanase/levansucrase/invertase"/>
    <property type="match status" value="1"/>
</dbReference>
<accession>Q0C8B3</accession>
<organism>
    <name type="scientific">Aspergillus terreus (strain NIH 2624 / FGSC A1156)</name>
    <dbReference type="NCBI Taxonomy" id="341663"/>
    <lineage>
        <taxon>Eukaryota</taxon>
        <taxon>Fungi</taxon>
        <taxon>Dikarya</taxon>
        <taxon>Ascomycota</taxon>
        <taxon>Pezizomycotina</taxon>
        <taxon>Eurotiomycetes</taxon>
        <taxon>Eurotiomycetidae</taxon>
        <taxon>Eurotiales</taxon>
        <taxon>Aspergillaceae</taxon>
        <taxon>Aspergillus</taxon>
        <taxon>Aspergillus subgen. Circumdati</taxon>
    </lineage>
</organism>
<reference key="1">
    <citation type="submission" date="2005-09" db="EMBL/GenBank/DDBJ databases">
        <title>Annotation of the Aspergillus terreus NIH2624 genome.</title>
        <authorList>
            <person name="Birren B.W."/>
            <person name="Lander E.S."/>
            <person name="Galagan J.E."/>
            <person name="Nusbaum C."/>
            <person name="Devon K."/>
            <person name="Henn M."/>
            <person name="Ma L.-J."/>
            <person name="Jaffe D.B."/>
            <person name="Butler J."/>
            <person name="Alvarez P."/>
            <person name="Gnerre S."/>
            <person name="Grabherr M."/>
            <person name="Kleber M."/>
            <person name="Mauceli E.W."/>
            <person name="Brockman W."/>
            <person name="Rounsley S."/>
            <person name="Young S.K."/>
            <person name="LaButti K."/>
            <person name="Pushparaj V."/>
            <person name="DeCaprio D."/>
            <person name="Crawford M."/>
            <person name="Koehrsen M."/>
            <person name="Engels R."/>
            <person name="Montgomery P."/>
            <person name="Pearson M."/>
            <person name="Howarth C."/>
            <person name="Larson L."/>
            <person name="Luoma S."/>
            <person name="White J."/>
            <person name="Alvarado L."/>
            <person name="Kodira C.D."/>
            <person name="Zeng Q."/>
            <person name="Oleary S."/>
            <person name="Yandava C."/>
            <person name="Denning D.W."/>
            <person name="Nierman W.C."/>
            <person name="Milne T."/>
            <person name="Madden K."/>
        </authorList>
    </citation>
    <scope>NUCLEOTIDE SEQUENCE [LARGE SCALE GENOMIC DNA]</scope>
    <source>
        <strain>NIH 2624 / FGSC A1156</strain>
    </source>
</reference>
<sequence length="326" mass="35088">MRPRQSKVTQVLSGAVLLASGAAASCSLPSTYSWTSTEALAEPKSGWTALKDFTNVVSNGQHIVYASTTDSSGNYGSMAFSPFADWSDMASASQNAMSASAVAPTIFYFAPKDVWILAYQWGPTAFSYKTSSDPSDANGWSEAQPLFSGSISDSSTGVIDQTVIGDDTNMYLFFAGDNGRIYRASMSIDNFPGDFGTQSEVVLEDTTNNLFEAVQVYKVDGQDQYLMIVEAIGSAGRYFRSFTASSLDGEWTVQAGTEDQPFAGKANSGASWTNDISHGDLVRNNPDQTFTVDPCNLQLLYQGKDPNSSGDYNQLAWRPGVLTLKV</sequence>
<gene>
    <name type="primary">axhA</name>
    <name type="ORF">ATEG_10071</name>
</gene>
<protein>
    <recommendedName>
        <fullName>Probable alpha-L-arabinofuranosidase axhA</fullName>
        <ecNumber>3.2.1.55</ecNumber>
    </recommendedName>
    <alternativeName>
        <fullName>Arabinoxylan arabinofuranohydrolase axhA</fullName>
    </alternativeName>
</protein>
<evidence type="ECO:0000250" key="1"/>
<evidence type="ECO:0000255" key="2"/>
<evidence type="ECO:0000305" key="3"/>
<feature type="signal peptide" evidence="2">
    <location>
        <begin position="1"/>
        <end position="24"/>
    </location>
</feature>
<feature type="chain" id="PRO_0000393535" description="Probable alpha-L-arabinofuranosidase axhA">
    <location>
        <begin position="25"/>
        <end position="326"/>
    </location>
</feature>
<feature type="glycosylation site" description="N-linked (GlcNAc...) asparagine" evidence="2">
    <location>
        <position position="307"/>
    </location>
</feature>
<comment type="function">
    <text evidence="1">Alpha-L-arabinofuranosidase involved in the hydrolysis of xylan, a major structural heterogeneous polysaccharide found in plant biomass representing the second most abundant polysaccharide in the biosphere, after cellulose. Releases L-arabinose from arabinoxylan (By similarity).</text>
</comment>
<comment type="catalytic activity">
    <reaction>
        <text>Hydrolysis of terminal non-reducing alpha-L-arabinofuranoside residues in alpha-L-arabinosides.</text>
        <dbReference type="EC" id="3.2.1.55"/>
    </reaction>
</comment>
<comment type="subcellular location">
    <subcellularLocation>
        <location evidence="1">Secreted</location>
    </subcellularLocation>
</comment>
<comment type="similarity">
    <text evidence="3">Belongs to the glycosyl hydrolase 62 family.</text>
</comment>
<name>AXHA_ASPTN</name>
<proteinExistence type="inferred from homology"/>